<accession>P08717</accession>
<reference key="1">
    <citation type="journal article" date="1986" name="Gene">
        <title>A DNA fragment hybridizing to a nif probe in Rhodobacter capsulatus is homologous to a 16S rRNA gene.</title>
        <authorList>
            <person name="Schumann J.P."/>
            <person name="Waitches G.M."/>
            <person name="Scolnik P.A."/>
        </authorList>
    </citation>
    <scope>NUCLEOTIDE SEQUENCE [GENOMIC DNA]</scope>
</reference>
<keyword id="KW-0067">ATP-binding</keyword>
<keyword id="KW-0408">Iron</keyword>
<keyword id="KW-0411">Iron-sulfur</keyword>
<keyword id="KW-0479">Metal-binding</keyword>
<keyword id="KW-0500">Molybdenum</keyword>
<keyword id="KW-0535">Nitrogen fixation</keyword>
<keyword id="KW-0547">Nucleotide-binding</keyword>
<keyword id="KW-0560">Oxidoreductase</keyword>
<gene>
    <name type="primary">nifD</name>
</gene>
<evidence type="ECO:0000250" key="1"/>
<evidence type="ECO:0000305" key="2"/>
<organism>
    <name type="scientific">Rhodobacter capsulatus</name>
    <name type="common">Rhodopseudomonas capsulata</name>
    <dbReference type="NCBI Taxonomy" id="1061"/>
    <lineage>
        <taxon>Bacteria</taxon>
        <taxon>Pseudomonadati</taxon>
        <taxon>Pseudomonadota</taxon>
        <taxon>Alphaproteobacteria</taxon>
        <taxon>Rhodobacterales</taxon>
        <taxon>Rhodobacter group</taxon>
        <taxon>Rhodobacter</taxon>
    </lineage>
</organism>
<dbReference type="EC" id="1.18.6.1"/>
<dbReference type="EMBL" id="M15270">
    <property type="protein sequence ID" value="AAA26141.1"/>
    <property type="molecule type" value="Genomic_DNA"/>
</dbReference>
<dbReference type="PIR" id="B29042">
    <property type="entry name" value="B29042"/>
</dbReference>
<dbReference type="SMR" id="P08717"/>
<dbReference type="GO" id="GO:0016612">
    <property type="term" value="C:molybdenum-iron nitrogenase complex"/>
    <property type="evidence" value="ECO:0007669"/>
    <property type="project" value="InterPro"/>
</dbReference>
<dbReference type="GO" id="GO:0005524">
    <property type="term" value="F:ATP binding"/>
    <property type="evidence" value="ECO:0007669"/>
    <property type="project" value="UniProtKB-KW"/>
</dbReference>
<dbReference type="GO" id="GO:0051536">
    <property type="term" value="F:iron-sulfur cluster binding"/>
    <property type="evidence" value="ECO:0007669"/>
    <property type="project" value="UniProtKB-KW"/>
</dbReference>
<dbReference type="GO" id="GO:0046872">
    <property type="term" value="F:metal ion binding"/>
    <property type="evidence" value="ECO:0007669"/>
    <property type="project" value="UniProtKB-KW"/>
</dbReference>
<dbReference type="GO" id="GO:0016163">
    <property type="term" value="F:nitrogenase activity"/>
    <property type="evidence" value="ECO:0007669"/>
    <property type="project" value="UniProtKB-EC"/>
</dbReference>
<dbReference type="GO" id="GO:0009399">
    <property type="term" value="P:nitrogen fixation"/>
    <property type="evidence" value="ECO:0007669"/>
    <property type="project" value="UniProtKB-KW"/>
</dbReference>
<dbReference type="CDD" id="cd01976">
    <property type="entry name" value="Nitrogenase_MoFe_alpha"/>
    <property type="match status" value="1"/>
</dbReference>
<dbReference type="Gene3D" id="3.40.50.1980">
    <property type="entry name" value="Nitrogenase molybdenum iron protein domain"/>
    <property type="match status" value="3"/>
</dbReference>
<dbReference type="InterPro" id="IPR000510">
    <property type="entry name" value="Nase/OxRdtase_comp1"/>
</dbReference>
<dbReference type="InterPro" id="IPR010143">
    <property type="entry name" value="Nase_comp1_asu"/>
</dbReference>
<dbReference type="InterPro" id="IPR000318">
    <property type="entry name" value="Nase_comp1_CS"/>
</dbReference>
<dbReference type="InterPro" id="IPR005972">
    <property type="entry name" value="Nase_Mo-Fe_asu"/>
</dbReference>
<dbReference type="NCBIfam" id="TIGR01862">
    <property type="entry name" value="N2-ase-Ialpha"/>
    <property type="match status" value="1"/>
</dbReference>
<dbReference type="NCBIfam" id="TIGR01282">
    <property type="entry name" value="nifD"/>
    <property type="match status" value="1"/>
</dbReference>
<dbReference type="PANTHER" id="PTHR43457">
    <property type="entry name" value="NITROGENASE MOLYBDENUM-IRON PROTEIN ALPHA CHAIN"/>
    <property type="match status" value="1"/>
</dbReference>
<dbReference type="PANTHER" id="PTHR43457:SF1">
    <property type="entry name" value="NITROGENASE MOLYBDENUM-IRON PROTEIN ALPHA CHAIN"/>
    <property type="match status" value="1"/>
</dbReference>
<dbReference type="Pfam" id="PF00148">
    <property type="entry name" value="Oxidored_nitro"/>
    <property type="match status" value="1"/>
</dbReference>
<dbReference type="SUPFAM" id="SSF53807">
    <property type="entry name" value="Helical backbone' metal receptor"/>
    <property type="match status" value="1"/>
</dbReference>
<dbReference type="PROSITE" id="PS00699">
    <property type="entry name" value="NITROGENASE_1_1"/>
    <property type="match status" value="1"/>
</dbReference>
<dbReference type="PROSITE" id="PS00090">
    <property type="entry name" value="NITROGENASE_1_2"/>
    <property type="match status" value="1"/>
</dbReference>
<sequence>MAKDHAGGPEDLERLVRDLIAEVLEAYPAKAQKKRAKHLSVAGATSEDADASRHRVEMRHVKSNIKSVPGVLTIRGCAYAGSKGVVWGPIKDMVHISHGPVGCGTYSWSQRRNYYTGKTGVDSFVTMQFTTDFQEKDIVFGGDKKLEKTIDEINELFPLSKGITIQSECPIGLIGDDIEAVSKKKNKEINKTIVPVRCEGFRGVSQSLGHHIANDAVRDWIFEQPESEATKAFEPGPYDVNIIGDYNIGGDAWASPILLEEIGLNVIWSGDATLAEMERAPKAKLNLIHCYRSMNYICRYMEEKYSIGWMEYNFFGPTQIEASLRIGKFDETIQANVEKVIAKYRPLVDGILAKYKPRLEGKSVMLYVRPRSAPRRHAYDDLGMVIAGTGYEFAHNDDYKRTGHYVKEGTIYDDVTGYELEKFIEKIRPDLVASGIKEEKYPVQKMGIPFRQMHSWDYSGPYHGYWASPILLDAPWDKPHRASSWKITPAAPWKAASEA</sequence>
<name>NIFD_RHOCA</name>
<comment type="function">
    <text>This molybdenum-iron protein is part of the nitrogenase complex that catalyzes the key enzymatic reactions in nitrogen fixation.</text>
</comment>
<comment type="catalytic activity">
    <reaction>
        <text>N2 + 8 reduced [2Fe-2S]-[ferredoxin] + 16 ATP + 16 H2O = H2 + 8 oxidized [2Fe-2S]-[ferredoxin] + 2 NH4(+) + 16 ADP + 16 phosphate + 6 H(+)</text>
        <dbReference type="Rhea" id="RHEA:21448"/>
        <dbReference type="Rhea" id="RHEA-COMP:10000"/>
        <dbReference type="Rhea" id="RHEA-COMP:10001"/>
        <dbReference type="ChEBI" id="CHEBI:15377"/>
        <dbReference type="ChEBI" id="CHEBI:15378"/>
        <dbReference type="ChEBI" id="CHEBI:17997"/>
        <dbReference type="ChEBI" id="CHEBI:18276"/>
        <dbReference type="ChEBI" id="CHEBI:28938"/>
        <dbReference type="ChEBI" id="CHEBI:30616"/>
        <dbReference type="ChEBI" id="CHEBI:33737"/>
        <dbReference type="ChEBI" id="CHEBI:33738"/>
        <dbReference type="ChEBI" id="CHEBI:43474"/>
        <dbReference type="ChEBI" id="CHEBI:456216"/>
        <dbReference type="EC" id="1.18.6.1"/>
    </reaction>
</comment>
<comment type="cofactor">
    <cofactor evidence="1">
        <name>[8Fe-7S] cluster</name>
        <dbReference type="ChEBI" id="CHEBI:21143"/>
    </cofactor>
    <text evidence="1">Binds 1 [8Fe-7S] cluster per heterodimer.</text>
</comment>
<comment type="cofactor">
    <cofactor evidence="1">
        <name>[7Fe-Mo-9S-C-homocitryl] cluster</name>
        <dbReference type="ChEBI" id="CHEBI:30409"/>
    </cofactor>
    <text evidence="1">Binds 1 [7Fe-Mo-9S-C-homocitryl] cluster per subunit.</text>
</comment>
<comment type="subunit">
    <text>Tetramer of two alpha and two beta chains. Forms complex with the iron protein (nitrogenase component 2).</text>
</comment>
<comment type="similarity">
    <text evidence="2">Belongs to the NifD/NifK/NifE/NifN family.</text>
</comment>
<feature type="chain" id="PRO_0000153081" description="Nitrogenase molybdenum-iron protein alpha chain">
    <location>
        <begin position="1"/>
        <end position="499"/>
    </location>
</feature>
<feature type="binding site" evidence="1">
    <location>
        <position position="77"/>
    </location>
    <ligand>
        <name>[8Fe-7S] cluster</name>
        <dbReference type="ChEBI" id="CHEBI:21143"/>
        <note>ligand shared with beta chain</note>
    </ligand>
</feature>
<feature type="binding site" evidence="1">
    <location>
        <position position="103"/>
    </location>
    <ligand>
        <name>[8Fe-7S] cluster</name>
        <dbReference type="ChEBI" id="CHEBI:21143"/>
        <note>ligand shared with beta chain</note>
    </ligand>
</feature>
<feature type="binding site" evidence="1">
    <location>
        <position position="169"/>
    </location>
    <ligand>
        <name>[8Fe-7S] cluster</name>
        <dbReference type="ChEBI" id="CHEBI:21143"/>
        <note>ligand shared with beta chain</note>
    </ligand>
</feature>
<feature type="binding site" evidence="1">
    <location>
        <position position="290"/>
    </location>
    <ligand>
        <name>[7Fe-Mo-9S-C-homocitryl] cluster</name>
        <dbReference type="ChEBI" id="CHEBI:30409"/>
    </ligand>
</feature>
<feature type="binding site" evidence="1">
    <location>
        <position position="454"/>
    </location>
    <ligand>
        <name>[7Fe-Mo-9S-C-homocitryl] cluster</name>
        <dbReference type="ChEBI" id="CHEBI:30409"/>
    </ligand>
</feature>
<proteinExistence type="inferred from homology"/>
<protein>
    <recommendedName>
        <fullName>Nitrogenase molybdenum-iron protein alpha chain</fullName>
        <ecNumber>1.18.6.1</ecNumber>
    </recommendedName>
    <alternativeName>
        <fullName>Dinitrogenase</fullName>
    </alternativeName>
    <alternativeName>
        <fullName>Nitrogenase component I</fullName>
    </alternativeName>
</protein>